<reference key="1">
    <citation type="journal article" date="1994" name="Microbiology">
        <title>Nucleotide sequence, expression and transcriptional analysis of the Corynebacterium glutamicum gltA gene encoding citrate synthase.</title>
        <authorList>
            <person name="Eikmanns B.J."/>
            <person name="Thum-Schmitz N."/>
            <person name="Eggeling L."/>
            <person name="Luedtke K.U."/>
            <person name="Sahm H."/>
        </authorList>
    </citation>
    <scope>NUCLEOTIDE SEQUENCE [GENOMIC DNA]</scope>
    <source>
        <strain>ATCC 13032 / DSM 20300 / JCM 1318 / BCRC 11384 / CCUG 27702 / LMG 3730 / NBRC 12168 / NCIMB 10025 / NRRL B-2784 / 534</strain>
    </source>
</reference>
<reference key="2">
    <citation type="journal article" date="2003" name="Appl. Microbiol. Biotechnol.">
        <title>The Corynebacterium glutamicum genome: features and impacts on biotechnological processes.</title>
        <authorList>
            <person name="Ikeda M."/>
            <person name="Nakagawa S."/>
        </authorList>
    </citation>
    <scope>NUCLEOTIDE SEQUENCE [LARGE SCALE GENOMIC DNA]</scope>
    <source>
        <strain>ATCC 13032 / DSM 20300 / JCM 1318 / BCRC 11384 / CCUG 27702 / LMG 3730 / NBRC 12168 / NCIMB 10025 / NRRL B-2784 / 534</strain>
    </source>
</reference>
<reference key="3">
    <citation type="journal article" date="2003" name="J. Biotechnol.">
        <title>The complete Corynebacterium glutamicum ATCC 13032 genome sequence and its impact on the production of L-aspartate-derived amino acids and vitamins.</title>
        <authorList>
            <person name="Kalinowski J."/>
            <person name="Bathe B."/>
            <person name="Bartels D."/>
            <person name="Bischoff N."/>
            <person name="Bott M."/>
            <person name="Burkovski A."/>
            <person name="Dusch N."/>
            <person name="Eggeling L."/>
            <person name="Eikmanns B.J."/>
            <person name="Gaigalat L."/>
            <person name="Goesmann A."/>
            <person name="Hartmann M."/>
            <person name="Huthmacher K."/>
            <person name="Kraemer R."/>
            <person name="Linke B."/>
            <person name="McHardy A.C."/>
            <person name="Meyer F."/>
            <person name="Moeckel B."/>
            <person name="Pfefferle W."/>
            <person name="Puehler A."/>
            <person name="Rey D.A."/>
            <person name="Rueckert C."/>
            <person name="Rupp O."/>
            <person name="Sahm H."/>
            <person name="Wendisch V.F."/>
            <person name="Wiegraebe I."/>
            <person name="Tauch A."/>
        </authorList>
    </citation>
    <scope>NUCLEOTIDE SEQUENCE [LARGE SCALE GENOMIC DNA]</scope>
    <source>
        <strain>ATCC 13032 / DSM 20300 / JCM 1318 / BCRC 11384 / CCUG 27702 / LMG 3730 / NBRC 12168 / NCIMB 10025 / NRRL B-2784 / 534</strain>
    </source>
</reference>
<comment type="catalytic activity">
    <reaction evidence="2">
        <text>oxaloacetate + acetyl-CoA + H2O = citrate + CoA + H(+)</text>
        <dbReference type="Rhea" id="RHEA:16845"/>
        <dbReference type="ChEBI" id="CHEBI:15377"/>
        <dbReference type="ChEBI" id="CHEBI:15378"/>
        <dbReference type="ChEBI" id="CHEBI:16452"/>
        <dbReference type="ChEBI" id="CHEBI:16947"/>
        <dbReference type="ChEBI" id="CHEBI:57287"/>
        <dbReference type="ChEBI" id="CHEBI:57288"/>
        <dbReference type="EC" id="2.3.3.16"/>
    </reaction>
</comment>
<comment type="activity regulation">
    <text>Weakly inhibited by ATP (apparent Ki = 10 mm).</text>
</comment>
<comment type="pathway">
    <text>Carbohydrate metabolism; tricarboxylic acid cycle; isocitrate from oxaloacetate: step 1/2.</text>
</comment>
<comment type="subunit">
    <text evidence="1">Homohexamer.</text>
</comment>
<comment type="miscellaneous">
    <text>Citrate synthase is found in nearly all cells capable of oxidative metabolism.</text>
</comment>
<comment type="similarity">
    <text evidence="3">Belongs to the citrate synthase family.</text>
</comment>
<gene>
    <name type="primary">gltA</name>
    <name type="ordered locus">Cgl0829</name>
    <name type="ordered locus">cg0949</name>
</gene>
<sequence>MFERDIVATDNNKAVLHYPGGEFEMDIIEASEGNNGVVLGKMLSETGLITFDPGYVSTGSTESKITYIDGDAGILRYRGYDIADLAENATFNEVSYLLINGELPTPDELHKFNDEIRHHTLLDEDFKSQFNVFPRDAHPMATLASSVNILSTYYQDQLNPLDEAQLDKATVRLMAKVPMLAAYAHRARKGAPYMYPDNSLNARENFLRMMFGYPTEPYEIDPIMVKALDKLLILHADHEQNCSTSTVRMIGSAQANMFVSIAGGINALSGPLHGGANQAVLEMLEDIKSNHGGDATEFMNKVKNKEDGVRLMGFGHRVYKNYDPRAAIVKETAHEILEHLGGDDLLDLAIKLEEIALADDYFISRKLYPNVDFYTGLIYRAMGFPTDFFTVLFAIGRLPGWIAHYREQLGAAGNKINRPRQVYTGNESRKLVPREER</sequence>
<name>CISY_CORGL</name>
<proteinExistence type="inferred from homology"/>
<keyword id="KW-0021">Allosteric enzyme</keyword>
<keyword id="KW-1185">Reference proteome</keyword>
<keyword id="KW-0808">Transferase</keyword>
<keyword id="KW-0816">Tricarboxylic acid cycle</keyword>
<protein>
    <recommendedName>
        <fullName>Citrate synthase</fullName>
        <ecNumber>2.3.3.16</ecNumber>
    </recommendedName>
</protein>
<evidence type="ECO:0000250" key="1"/>
<evidence type="ECO:0000255" key="2">
    <source>
        <dbReference type="PROSITE-ProRule" id="PRU10117"/>
    </source>
</evidence>
<evidence type="ECO:0000305" key="3"/>
<organism>
    <name type="scientific">Corynebacterium glutamicum (strain ATCC 13032 / DSM 20300 / JCM 1318 / BCRC 11384 / CCUG 27702 / LMG 3730 / NBRC 12168 / NCIMB 10025 / NRRL B-2784 / 534)</name>
    <dbReference type="NCBI Taxonomy" id="196627"/>
    <lineage>
        <taxon>Bacteria</taxon>
        <taxon>Bacillati</taxon>
        <taxon>Actinomycetota</taxon>
        <taxon>Actinomycetes</taxon>
        <taxon>Mycobacteriales</taxon>
        <taxon>Corynebacteriaceae</taxon>
        <taxon>Corynebacterium</taxon>
    </lineage>
</organism>
<dbReference type="EC" id="2.3.3.16"/>
<dbReference type="EMBL" id="X66112">
    <property type="protein sequence ID" value="CAA46902.1"/>
    <property type="molecule type" value="Genomic_DNA"/>
</dbReference>
<dbReference type="EMBL" id="BA000036">
    <property type="protein sequence ID" value="BAB98222.1"/>
    <property type="molecule type" value="Genomic_DNA"/>
</dbReference>
<dbReference type="EMBL" id="BX927150">
    <property type="protein sequence ID" value="CAF19535.1"/>
    <property type="molecule type" value="Genomic_DNA"/>
</dbReference>
<dbReference type="PIR" id="I40717">
    <property type="entry name" value="I40717"/>
</dbReference>
<dbReference type="RefSeq" id="NP_600058.1">
    <property type="nucleotide sequence ID" value="NC_003450.3"/>
</dbReference>
<dbReference type="RefSeq" id="WP_011013914.1">
    <property type="nucleotide sequence ID" value="NC_006958.1"/>
</dbReference>
<dbReference type="SMR" id="P42457"/>
<dbReference type="STRING" id="196627.cg0949"/>
<dbReference type="KEGG" id="cgb:cg0949"/>
<dbReference type="KEGG" id="cgl:Cgl0829"/>
<dbReference type="PATRIC" id="fig|196627.13.peg.813"/>
<dbReference type="eggNOG" id="COG0372">
    <property type="taxonomic scope" value="Bacteria"/>
</dbReference>
<dbReference type="HOGENOM" id="CLU_025068_0_0_11"/>
<dbReference type="OrthoDB" id="9800864at2"/>
<dbReference type="BioCyc" id="CORYNE:G18NG-10398-MONOMER"/>
<dbReference type="UniPathway" id="UPA00223">
    <property type="reaction ID" value="UER00717"/>
</dbReference>
<dbReference type="Proteomes" id="UP000000582">
    <property type="component" value="Chromosome"/>
</dbReference>
<dbReference type="Proteomes" id="UP000001009">
    <property type="component" value="Chromosome"/>
</dbReference>
<dbReference type="GO" id="GO:0005737">
    <property type="term" value="C:cytoplasm"/>
    <property type="evidence" value="ECO:0007669"/>
    <property type="project" value="InterPro"/>
</dbReference>
<dbReference type="GO" id="GO:0004108">
    <property type="term" value="F:citrate (Si)-synthase activity"/>
    <property type="evidence" value="ECO:0007669"/>
    <property type="project" value="InterPro"/>
</dbReference>
<dbReference type="GO" id="GO:0006099">
    <property type="term" value="P:tricarboxylic acid cycle"/>
    <property type="evidence" value="ECO:0007669"/>
    <property type="project" value="UniProtKB-UniPathway"/>
</dbReference>
<dbReference type="CDD" id="cd06114">
    <property type="entry name" value="EcCS_like"/>
    <property type="match status" value="1"/>
</dbReference>
<dbReference type="FunFam" id="1.10.230.10:FF:000002">
    <property type="entry name" value="Citrate synthase"/>
    <property type="match status" value="1"/>
</dbReference>
<dbReference type="Gene3D" id="2.20.28.60">
    <property type="match status" value="1"/>
</dbReference>
<dbReference type="Gene3D" id="1.10.580.10">
    <property type="entry name" value="Citrate Synthase, domain 1"/>
    <property type="match status" value="1"/>
</dbReference>
<dbReference type="Gene3D" id="1.10.230.10">
    <property type="entry name" value="Cytochrome P450-Terp, domain 2"/>
    <property type="match status" value="1"/>
</dbReference>
<dbReference type="InterPro" id="IPR016142">
    <property type="entry name" value="Citrate_synth-like_lrg_a-sub"/>
</dbReference>
<dbReference type="InterPro" id="IPR016143">
    <property type="entry name" value="Citrate_synth-like_sm_a-sub"/>
</dbReference>
<dbReference type="InterPro" id="IPR002020">
    <property type="entry name" value="Citrate_synthase"/>
</dbReference>
<dbReference type="InterPro" id="IPR019810">
    <property type="entry name" value="Citrate_synthase_AS"/>
</dbReference>
<dbReference type="InterPro" id="IPR024176">
    <property type="entry name" value="Citrate_synthase_bac-typ"/>
</dbReference>
<dbReference type="InterPro" id="IPR036969">
    <property type="entry name" value="Citrate_synthase_sf"/>
</dbReference>
<dbReference type="InterPro" id="IPR010953">
    <property type="entry name" value="Citrate_synthase_typ-I"/>
</dbReference>
<dbReference type="NCBIfam" id="TIGR01798">
    <property type="entry name" value="cit_synth_I"/>
    <property type="match status" value="1"/>
</dbReference>
<dbReference type="NCBIfam" id="NF004126">
    <property type="entry name" value="PRK05614.1"/>
    <property type="match status" value="1"/>
</dbReference>
<dbReference type="PANTHER" id="PTHR42871">
    <property type="entry name" value="CITRATE SYNTHASE"/>
    <property type="match status" value="1"/>
</dbReference>
<dbReference type="PANTHER" id="PTHR42871:SF1">
    <property type="entry name" value="CITRATE SYNTHASE"/>
    <property type="match status" value="1"/>
</dbReference>
<dbReference type="Pfam" id="PF00285">
    <property type="entry name" value="Citrate_synt"/>
    <property type="match status" value="1"/>
</dbReference>
<dbReference type="PIRSF" id="PIRSF001369">
    <property type="entry name" value="Citrate_synth"/>
    <property type="match status" value="1"/>
</dbReference>
<dbReference type="PRINTS" id="PR00143">
    <property type="entry name" value="CITRTSNTHASE"/>
</dbReference>
<dbReference type="SUPFAM" id="SSF48256">
    <property type="entry name" value="Citrate synthase"/>
    <property type="match status" value="1"/>
</dbReference>
<dbReference type="PROSITE" id="PS00480">
    <property type="entry name" value="CITRATE_SYNTHASE"/>
    <property type="match status" value="1"/>
</dbReference>
<feature type="chain" id="PRO_0000169940" description="Citrate synthase">
    <location>
        <begin position="1"/>
        <end position="437"/>
    </location>
</feature>
<feature type="active site" evidence="2">
    <location>
        <position position="316"/>
    </location>
</feature>
<feature type="active site" evidence="2">
    <location>
        <position position="372"/>
    </location>
</feature>
<accession>P42457</accession>